<name>NAGK_ERWT9</name>
<sequence length="303" mass="33022">MFYGFDIGGSKIALGVYNAHRQLIWQRRVATPKDDYAQLLAAIDTLTQQADGFCGVRGSVGIGVPGLPIADDGTIFSANIPAARGRTLRADLSARLGREVRIDNDANCFALSEAWDDEFMQYPVVLGMILGTGVGGGLIVDGKPVTGRNYVVGELGHMRLPVDALRVLGRDIPLLPCGCGKYGCIEGYLSGNGFSWLWHYFYQKTHSAPEIIRRYYEGDTDALAHTERYRELLAVCLGNILTLLDPHLVVLGGGLSNFDALYDGLSERVSSHLLPVARPPRFERARHGDAGGMRGAAFLHLKF</sequence>
<feature type="chain" id="PRO_1000140188" description="N-acetyl-D-glucosamine kinase">
    <location>
        <begin position="1"/>
        <end position="303"/>
    </location>
</feature>
<feature type="binding site" evidence="1">
    <location>
        <begin position="4"/>
        <end position="11"/>
    </location>
    <ligand>
        <name>ATP</name>
        <dbReference type="ChEBI" id="CHEBI:30616"/>
    </ligand>
</feature>
<feature type="binding site" evidence="1">
    <location>
        <begin position="133"/>
        <end position="140"/>
    </location>
    <ligand>
        <name>ATP</name>
        <dbReference type="ChEBI" id="CHEBI:30616"/>
    </ligand>
</feature>
<feature type="binding site" evidence="1">
    <location>
        <position position="157"/>
    </location>
    <ligand>
        <name>Zn(2+)</name>
        <dbReference type="ChEBI" id="CHEBI:29105"/>
    </ligand>
</feature>
<feature type="binding site" evidence="1">
    <location>
        <position position="177"/>
    </location>
    <ligand>
        <name>Zn(2+)</name>
        <dbReference type="ChEBI" id="CHEBI:29105"/>
    </ligand>
</feature>
<feature type="binding site" evidence="1">
    <location>
        <position position="179"/>
    </location>
    <ligand>
        <name>Zn(2+)</name>
        <dbReference type="ChEBI" id="CHEBI:29105"/>
    </ligand>
</feature>
<feature type="binding site" evidence="1">
    <location>
        <position position="184"/>
    </location>
    <ligand>
        <name>Zn(2+)</name>
        <dbReference type="ChEBI" id="CHEBI:29105"/>
    </ligand>
</feature>
<comment type="function">
    <text evidence="1">Catalyzes the phosphorylation of N-acetyl-D-glucosamine (GlcNAc) derived from cell-wall degradation, yielding GlcNAc-6-P.</text>
</comment>
<comment type="catalytic activity">
    <reaction evidence="1">
        <text>N-acetyl-D-glucosamine + ATP = N-acetyl-D-glucosamine 6-phosphate + ADP + H(+)</text>
        <dbReference type="Rhea" id="RHEA:17417"/>
        <dbReference type="ChEBI" id="CHEBI:15378"/>
        <dbReference type="ChEBI" id="CHEBI:30616"/>
        <dbReference type="ChEBI" id="CHEBI:57513"/>
        <dbReference type="ChEBI" id="CHEBI:456216"/>
        <dbReference type="ChEBI" id="CHEBI:506227"/>
        <dbReference type="EC" id="2.7.1.59"/>
    </reaction>
</comment>
<comment type="pathway">
    <text evidence="1">Cell wall biogenesis; peptidoglycan recycling.</text>
</comment>
<comment type="similarity">
    <text evidence="1">Belongs to the ROK (NagC/XylR) family. NagK subfamily.</text>
</comment>
<keyword id="KW-0067">ATP-binding</keyword>
<keyword id="KW-0119">Carbohydrate metabolism</keyword>
<keyword id="KW-0418">Kinase</keyword>
<keyword id="KW-0479">Metal-binding</keyword>
<keyword id="KW-0547">Nucleotide-binding</keyword>
<keyword id="KW-1185">Reference proteome</keyword>
<keyword id="KW-0808">Transferase</keyword>
<keyword id="KW-0862">Zinc</keyword>
<reference key="1">
    <citation type="journal article" date="2008" name="Environ. Microbiol.">
        <title>The genome of Erwinia tasmaniensis strain Et1/99, a non-pathogenic bacterium in the genus Erwinia.</title>
        <authorList>
            <person name="Kube M."/>
            <person name="Migdoll A.M."/>
            <person name="Mueller I."/>
            <person name="Kuhl H."/>
            <person name="Beck A."/>
            <person name="Reinhardt R."/>
            <person name="Geider K."/>
        </authorList>
    </citation>
    <scope>NUCLEOTIDE SEQUENCE [LARGE SCALE GENOMIC DNA]</scope>
    <source>
        <strain>DSM 17950 / CFBP 7177 / CIP 109463 / NCPPB 4357 / Et1/99</strain>
    </source>
</reference>
<proteinExistence type="inferred from homology"/>
<protein>
    <recommendedName>
        <fullName evidence="1">N-acetyl-D-glucosamine kinase</fullName>
        <ecNumber evidence="1">2.7.1.59</ecNumber>
    </recommendedName>
    <alternativeName>
        <fullName evidence="1">GlcNAc kinase</fullName>
    </alternativeName>
</protein>
<dbReference type="EC" id="2.7.1.59" evidence="1"/>
<dbReference type="EMBL" id="CU468135">
    <property type="protein sequence ID" value="CAO97022.1"/>
    <property type="molecule type" value="Genomic_DNA"/>
</dbReference>
<dbReference type="RefSeq" id="WP_012441700.1">
    <property type="nucleotide sequence ID" value="NC_010694.1"/>
</dbReference>
<dbReference type="SMR" id="B2VDQ9"/>
<dbReference type="STRING" id="465817.ETA_19760"/>
<dbReference type="KEGG" id="eta:ETA_19760"/>
<dbReference type="eggNOG" id="COG1940">
    <property type="taxonomic scope" value="Bacteria"/>
</dbReference>
<dbReference type="HOGENOM" id="CLU_036604_0_3_6"/>
<dbReference type="OrthoDB" id="9810372at2"/>
<dbReference type="UniPathway" id="UPA00544"/>
<dbReference type="Proteomes" id="UP000001726">
    <property type="component" value="Chromosome"/>
</dbReference>
<dbReference type="GO" id="GO:0005524">
    <property type="term" value="F:ATP binding"/>
    <property type="evidence" value="ECO:0007669"/>
    <property type="project" value="UniProtKB-UniRule"/>
</dbReference>
<dbReference type="GO" id="GO:0045127">
    <property type="term" value="F:N-acetylglucosamine kinase activity"/>
    <property type="evidence" value="ECO:0007669"/>
    <property type="project" value="UniProtKB-UniRule"/>
</dbReference>
<dbReference type="GO" id="GO:0008270">
    <property type="term" value="F:zinc ion binding"/>
    <property type="evidence" value="ECO:0007669"/>
    <property type="project" value="UniProtKB-UniRule"/>
</dbReference>
<dbReference type="GO" id="GO:0006044">
    <property type="term" value="P:N-acetylglucosamine metabolic process"/>
    <property type="evidence" value="ECO:0007669"/>
    <property type="project" value="UniProtKB-UniRule"/>
</dbReference>
<dbReference type="GO" id="GO:0009254">
    <property type="term" value="P:peptidoglycan turnover"/>
    <property type="evidence" value="ECO:0007669"/>
    <property type="project" value="UniProtKB-UniRule"/>
</dbReference>
<dbReference type="CDD" id="cd24057">
    <property type="entry name" value="ASKHA_NBD_ROK_NAGK"/>
    <property type="match status" value="1"/>
</dbReference>
<dbReference type="FunFam" id="3.30.420.40:FF:000049">
    <property type="entry name" value="N-acetyl-D-glucosamine kinase"/>
    <property type="match status" value="1"/>
</dbReference>
<dbReference type="Gene3D" id="3.30.420.40">
    <property type="match status" value="2"/>
</dbReference>
<dbReference type="HAMAP" id="MF_01271">
    <property type="entry name" value="GlcNAc_kinase"/>
    <property type="match status" value="1"/>
</dbReference>
<dbReference type="InterPro" id="IPR043129">
    <property type="entry name" value="ATPase_NBD"/>
</dbReference>
<dbReference type="InterPro" id="IPR023505">
    <property type="entry name" value="N-acetyl-D-glucosamine_kinase"/>
</dbReference>
<dbReference type="InterPro" id="IPR000600">
    <property type="entry name" value="ROK"/>
</dbReference>
<dbReference type="InterPro" id="IPR049874">
    <property type="entry name" value="ROK_cs"/>
</dbReference>
<dbReference type="NCBIfam" id="NF009835">
    <property type="entry name" value="PRK13310.1"/>
    <property type="match status" value="1"/>
</dbReference>
<dbReference type="PANTHER" id="PTHR18964:SF162">
    <property type="entry name" value="N-ACETYL-D-GLUCOSAMINE KINASE"/>
    <property type="match status" value="1"/>
</dbReference>
<dbReference type="PANTHER" id="PTHR18964">
    <property type="entry name" value="ROK (REPRESSOR, ORF, KINASE) FAMILY"/>
    <property type="match status" value="1"/>
</dbReference>
<dbReference type="Pfam" id="PF00480">
    <property type="entry name" value="ROK"/>
    <property type="match status" value="1"/>
</dbReference>
<dbReference type="SUPFAM" id="SSF53067">
    <property type="entry name" value="Actin-like ATPase domain"/>
    <property type="match status" value="1"/>
</dbReference>
<dbReference type="PROSITE" id="PS01125">
    <property type="entry name" value="ROK"/>
    <property type="match status" value="1"/>
</dbReference>
<accession>B2VDQ9</accession>
<evidence type="ECO:0000255" key="1">
    <source>
        <dbReference type="HAMAP-Rule" id="MF_01271"/>
    </source>
</evidence>
<gene>
    <name evidence="1" type="primary">nagK</name>
    <name type="ordered locus">ETA_19760</name>
</gene>
<organism>
    <name type="scientific">Erwinia tasmaniensis (strain DSM 17950 / CFBP 7177 / CIP 109463 / NCPPB 4357 / Et1/99)</name>
    <dbReference type="NCBI Taxonomy" id="465817"/>
    <lineage>
        <taxon>Bacteria</taxon>
        <taxon>Pseudomonadati</taxon>
        <taxon>Pseudomonadota</taxon>
        <taxon>Gammaproteobacteria</taxon>
        <taxon>Enterobacterales</taxon>
        <taxon>Erwiniaceae</taxon>
        <taxon>Erwinia</taxon>
    </lineage>
</organism>